<name>CFA73_MOUSE</name>
<proteinExistence type="inferred from homology"/>
<gene>
    <name evidence="4" type="primary">Cfap73</name>
    <name evidence="4" type="synonym">Ccdc42b</name>
</gene>
<reference key="1">
    <citation type="journal article" date="2009" name="PLoS Biol.">
        <title>Lineage-specific biology revealed by a finished genome assembly of the mouse.</title>
        <authorList>
            <person name="Church D.M."/>
            <person name="Goodstadt L."/>
            <person name="Hillier L.W."/>
            <person name="Zody M.C."/>
            <person name="Goldstein S."/>
            <person name="She X."/>
            <person name="Bult C.J."/>
            <person name="Agarwala R."/>
            <person name="Cherry J.L."/>
            <person name="DiCuccio M."/>
            <person name="Hlavina W."/>
            <person name="Kapustin Y."/>
            <person name="Meric P."/>
            <person name="Maglott D."/>
            <person name="Birtle Z."/>
            <person name="Marques A.C."/>
            <person name="Graves T."/>
            <person name="Zhou S."/>
            <person name="Teague B."/>
            <person name="Potamousis K."/>
            <person name="Churas C."/>
            <person name="Place M."/>
            <person name="Herschleb J."/>
            <person name="Runnheim R."/>
            <person name="Forrest D."/>
            <person name="Amos-Landgraf J."/>
            <person name="Schwartz D.C."/>
            <person name="Cheng Z."/>
            <person name="Lindblad-Toh K."/>
            <person name="Eichler E.E."/>
            <person name="Ponting C.P."/>
        </authorList>
    </citation>
    <scope>NUCLEOTIDE SEQUENCE [LARGE SCALE GENOMIC DNA]</scope>
    <source>
        <strain>C57BL/6J</strain>
    </source>
</reference>
<organism>
    <name type="scientific">Mus musculus</name>
    <name type="common">Mouse</name>
    <dbReference type="NCBI Taxonomy" id="10090"/>
    <lineage>
        <taxon>Eukaryota</taxon>
        <taxon>Metazoa</taxon>
        <taxon>Chordata</taxon>
        <taxon>Craniata</taxon>
        <taxon>Vertebrata</taxon>
        <taxon>Euteleostomi</taxon>
        <taxon>Mammalia</taxon>
        <taxon>Eutheria</taxon>
        <taxon>Euarchontoglires</taxon>
        <taxon>Glires</taxon>
        <taxon>Rodentia</taxon>
        <taxon>Myomorpha</taxon>
        <taxon>Muroidea</taxon>
        <taxon>Muridae</taxon>
        <taxon>Murinae</taxon>
        <taxon>Mus</taxon>
        <taxon>Mus</taxon>
    </lineage>
</organism>
<comment type="function">
    <text evidence="1">May play a role in ciliary/flagellar motility by regulating the assembly and the activity of axonemal inner dynein arm.</text>
</comment>
<comment type="subcellular location">
    <subcellularLocation>
        <location evidence="1">Cytoplasm</location>
        <location evidence="1">Cytoskeleton</location>
        <location evidence="1">Cilium axoneme</location>
    </subcellularLocation>
</comment>
<comment type="similarity">
    <text evidence="3">Belongs to the CFAP73 family.</text>
</comment>
<sequence>MAVTWEEYFRLVFSEKVQPKPLEQTGDDSSVLQLILEKKEELAVADLGLQAQKKEYRSTIESVNQRWRELEQKGQELQGSVISYDKFLKEVEARRAARKAIEERKITGNLDAELRRLRTQLKELRLQRARLQRKVQRLEPCARILKRALEKRPVFEEVSDLVARFETLVSTKAALKLEEQKRLVEMESTRAQLLSLQSEKQDEMLNLNQQRTQLVEQLEAAREHRQQWESKWTEILNSASEKTLLLGRARMAVLNLYHLVRLQQGRRQTLDVRDVEGQLEEVKRFIMNISATLAKLALAQPTATAS</sequence>
<evidence type="ECO:0000250" key="1">
    <source>
        <dbReference type="UniProtKB" id="M1V4Y8"/>
    </source>
</evidence>
<evidence type="ECO:0000255" key="2"/>
<evidence type="ECO:0000305" key="3"/>
<evidence type="ECO:0000312" key="4">
    <source>
        <dbReference type="MGI" id="MGI:3779542"/>
    </source>
</evidence>
<accession>J3QPZ5</accession>
<feature type="chain" id="PRO_0000437481" description="Cilia- and flagella-associated protein 73">
    <location>
        <begin position="1"/>
        <end position="306"/>
    </location>
</feature>
<feature type="coiled-coil region" evidence="2">
    <location>
        <begin position="49"/>
        <end position="139"/>
    </location>
</feature>
<feature type="coiled-coil region" evidence="2">
    <location>
        <begin position="197"/>
        <end position="231"/>
    </location>
</feature>
<dbReference type="EMBL" id="AC125183">
    <property type="status" value="NOT_ANNOTATED_CDS"/>
    <property type="molecule type" value="Genomic_DNA"/>
</dbReference>
<dbReference type="CCDS" id="CCDS57376.1"/>
<dbReference type="RefSeq" id="NP_001182023.1">
    <property type="nucleotide sequence ID" value="NM_001195094.1"/>
</dbReference>
<dbReference type="SMR" id="J3QPZ5"/>
<dbReference type="STRING" id="10090.ENSMUSP00000137554"/>
<dbReference type="PaxDb" id="10090-ENSMUSP00000137554"/>
<dbReference type="ProteomicsDB" id="281393"/>
<dbReference type="Antibodypedia" id="62409">
    <property type="antibodies" value="23 antibodies from 7 providers"/>
</dbReference>
<dbReference type="Ensembl" id="ENSMUST00000177908.2">
    <property type="protein sequence ID" value="ENSMUSP00000137554.2"/>
    <property type="gene ID" value="ENSMUSG00000094282.2"/>
</dbReference>
<dbReference type="GeneID" id="546886"/>
<dbReference type="KEGG" id="mmu:546886"/>
<dbReference type="UCSC" id="uc012ecs.1">
    <property type="organism name" value="mouse"/>
</dbReference>
<dbReference type="AGR" id="MGI:3779542"/>
<dbReference type="CTD" id="387885"/>
<dbReference type="MGI" id="MGI:3779542">
    <property type="gene designation" value="Cfap73"/>
</dbReference>
<dbReference type="VEuPathDB" id="HostDB:ENSMUSG00000094282"/>
<dbReference type="eggNOG" id="ENOG502QRZS">
    <property type="taxonomic scope" value="Eukaryota"/>
</dbReference>
<dbReference type="GeneTree" id="ENSGT00940000153110"/>
<dbReference type="HOGENOM" id="CLU_061472_3_0_1"/>
<dbReference type="InParanoid" id="J3QPZ5"/>
<dbReference type="OMA" id="SIEMLYI"/>
<dbReference type="OrthoDB" id="10264298at2759"/>
<dbReference type="PhylomeDB" id="J3QPZ5"/>
<dbReference type="TreeFam" id="TF327270"/>
<dbReference type="BioGRID-ORCS" id="546886">
    <property type="hits" value="2 hits in 45 CRISPR screens"/>
</dbReference>
<dbReference type="PRO" id="PR:J3QPZ5"/>
<dbReference type="Proteomes" id="UP000000589">
    <property type="component" value="Chromosome 5"/>
</dbReference>
<dbReference type="RNAct" id="J3QPZ5">
    <property type="molecule type" value="protein"/>
</dbReference>
<dbReference type="Bgee" id="ENSMUSG00000094282">
    <property type="expression patterns" value="Expressed in spermatid and 20 other cell types or tissues"/>
</dbReference>
<dbReference type="GO" id="GO:0097545">
    <property type="term" value="C:axonemal doublet microtubule"/>
    <property type="evidence" value="ECO:0000250"/>
    <property type="project" value="UniProtKB"/>
</dbReference>
<dbReference type="GO" id="GO:0031514">
    <property type="term" value="C:motile cilium"/>
    <property type="evidence" value="ECO:0000250"/>
    <property type="project" value="UniProtKB"/>
</dbReference>
<dbReference type="GO" id="GO:0070840">
    <property type="term" value="F:dynein complex binding"/>
    <property type="evidence" value="ECO:0000250"/>
    <property type="project" value="UniProtKB"/>
</dbReference>
<dbReference type="GO" id="GO:0003341">
    <property type="term" value="P:cilium movement"/>
    <property type="evidence" value="ECO:0000250"/>
    <property type="project" value="UniProtKB"/>
</dbReference>
<dbReference type="GO" id="GO:0036159">
    <property type="term" value="P:inner dynein arm assembly"/>
    <property type="evidence" value="ECO:0000250"/>
    <property type="project" value="UniProtKB"/>
</dbReference>
<dbReference type="InterPro" id="IPR051147">
    <property type="entry name" value="CFAP_domain-containing"/>
</dbReference>
<dbReference type="InterPro" id="IPR025252">
    <property type="entry name" value="DUF4200"/>
</dbReference>
<dbReference type="PANTHER" id="PTHR21683:SF9">
    <property type="entry name" value="CILIA- AND FLAGELLA-ASSOCIATED PROTEIN 73"/>
    <property type="match status" value="1"/>
</dbReference>
<dbReference type="PANTHER" id="PTHR21683">
    <property type="entry name" value="COILED-COIL DOMAIN-CONTAINING PROTEIN 42 LIKE-2-LIKE-RELATED"/>
    <property type="match status" value="1"/>
</dbReference>
<dbReference type="Pfam" id="PF13863">
    <property type="entry name" value="DUF4200"/>
    <property type="match status" value="1"/>
</dbReference>
<protein>
    <recommendedName>
        <fullName evidence="3">Cilia- and flagella-associated protein 73</fullName>
    </recommendedName>
    <alternativeName>
        <fullName evidence="4">Coiled-coil domain-containing protein 42B</fullName>
    </alternativeName>
</protein>
<keyword id="KW-0966">Cell projection</keyword>
<keyword id="KW-0969">Cilium</keyword>
<keyword id="KW-0175">Coiled coil</keyword>
<keyword id="KW-0963">Cytoplasm</keyword>
<keyword id="KW-0206">Cytoskeleton</keyword>
<keyword id="KW-1185">Reference proteome</keyword>